<evidence type="ECO:0000255" key="1">
    <source>
        <dbReference type="HAMAP-Rule" id="MF_00246"/>
    </source>
</evidence>
<comment type="function">
    <text evidence="1">Catalyzes the transfer of the gamma-phosphate of ATP to D-galactose to form alpha-D-galactose-1-phosphate (Gal-1-P).</text>
</comment>
<comment type="catalytic activity">
    <reaction evidence="1">
        <text>alpha-D-galactose + ATP = alpha-D-galactose 1-phosphate + ADP + H(+)</text>
        <dbReference type="Rhea" id="RHEA:13553"/>
        <dbReference type="ChEBI" id="CHEBI:15378"/>
        <dbReference type="ChEBI" id="CHEBI:28061"/>
        <dbReference type="ChEBI" id="CHEBI:30616"/>
        <dbReference type="ChEBI" id="CHEBI:58336"/>
        <dbReference type="ChEBI" id="CHEBI:456216"/>
        <dbReference type="EC" id="2.7.1.6"/>
    </reaction>
</comment>
<comment type="pathway">
    <text evidence="1">Carbohydrate metabolism; galactose metabolism.</text>
</comment>
<comment type="subcellular location">
    <subcellularLocation>
        <location evidence="1">Cytoplasm</location>
    </subcellularLocation>
</comment>
<comment type="similarity">
    <text evidence="1">Belongs to the GHMP kinase family. GalK subfamily.</text>
</comment>
<accession>B5YRF5</accession>
<name>GAL1_ECO5E</name>
<proteinExistence type="inferred from homology"/>
<keyword id="KW-0067">ATP-binding</keyword>
<keyword id="KW-0119">Carbohydrate metabolism</keyword>
<keyword id="KW-0963">Cytoplasm</keyword>
<keyword id="KW-0299">Galactose metabolism</keyword>
<keyword id="KW-0418">Kinase</keyword>
<keyword id="KW-0460">Magnesium</keyword>
<keyword id="KW-0479">Metal-binding</keyword>
<keyword id="KW-0547">Nucleotide-binding</keyword>
<keyword id="KW-0808">Transferase</keyword>
<feature type="chain" id="PRO_1000100827" description="Galactokinase">
    <location>
        <begin position="1"/>
        <end position="382"/>
    </location>
</feature>
<feature type="active site" description="Proton acceptor" evidence="1">
    <location>
        <position position="174"/>
    </location>
</feature>
<feature type="binding site" evidence="1">
    <location>
        <begin position="34"/>
        <end position="37"/>
    </location>
    <ligand>
        <name>substrate</name>
    </ligand>
</feature>
<feature type="binding site" evidence="1">
    <location>
        <begin position="124"/>
        <end position="130"/>
    </location>
    <ligand>
        <name>ATP</name>
        <dbReference type="ChEBI" id="CHEBI:30616"/>
    </ligand>
</feature>
<feature type="binding site" evidence="1">
    <location>
        <position position="130"/>
    </location>
    <ligand>
        <name>Mg(2+)</name>
        <dbReference type="ChEBI" id="CHEBI:18420"/>
    </ligand>
</feature>
<feature type="binding site" evidence="1">
    <location>
        <position position="162"/>
    </location>
    <ligand>
        <name>Mg(2+)</name>
        <dbReference type="ChEBI" id="CHEBI:18420"/>
    </ligand>
</feature>
<feature type="binding site" evidence="1">
    <location>
        <position position="223"/>
    </location>
    <ligand>
        <name>substrate</name>
    </ligand>
</feature>
<feature type="site" description="Transition state stabilizer" evidence="1">
    <location>
        <position position="28"/>
    </location>
</feature>
<dbReference type="EC" id="2.7.1.6" evidence="1"/>
<dbReference type="EMBL" id="CP001164">
    <property type="protein sequence ID" value="ACI37793.1"/>
    <property type="molecule type" value="Genomic_DNA"/>
</dbReference>
<dbReference type="RefSeq" id="WP_000053415.1">
    <property type="nucleotide sequence ID" value="NC_011353.1"/>
</dbReference>
<dbReference type="SMR" id="B5YRF5"/>
<dbReference type="GeneID" id="75170756"/>
<dbReference type="KEGG" id="ecf:ECH74115_0860"/>
<dbReference type="HOGENOM" id="CLU_017814_2_1_6"/>
<dbReference type="UniPathway" id="UPA00214"/>
<dbReference type="GO" id="GO:0005829">
    <property type="term" value="C:cytosol"/>
    <property type="evidence" value="ECO:0007669"/>
    <property type="project" value="TreeGrafter"/>
</dbReference>
<dbReference type="GO" id="GO:0005524">
    <property type="term" value="F:ATP binding"/>
    <property type="evidence" value="ECO:0007669"/>
    <property type="project" value="UniProtKB-UniRule"/>
</dbReference>
<dbReference type="GO" id="GO:0004335">
    <property type="term" value="F:galactokinase activity"/>
    <property type="evidence" value="ECO:0007669"/>
    <property type="project" value="UniProtKB-UniRule"/>
</dbReference>
<dbReference type="GO" id="GO:0000287">
    <property type="term" value="F:magnesium ion binding"/>
    <property type="evidence" value="ECO:0007669"/>
    <property type="project" value="UniProtKB-UniRule"/>
</dbReference>
<dbReference type="GO" id="GO:0006012">
    <property type="term" value="P:galactose metabolic process"/>
    <property type="evidence" value="ECO:0007669"/>
    <property type="project" value="UniProtKB-UniRule"/>
</dbReference>
<dbReference type="FunFam" id="3.30.230.10:FF:000017">
    <property type="entry name" value="Galactokinase"/>
    <property type="match status" value="1"/>
</dbReference>
<dbReference type="FunFam" id="3.30.70.890:FF:000001">
    <property type="entry name" value="Galactokinase"/>
    <property type="match status" value="1"/>
</dbReference>
<dbReference type="Gene3D" id="3.30.230.10">
    <property type="match status" value="1"/>
</dbReference>
<dbReference type="Gene3D" id="3.30.70.890">
    <property type="entry name" value="GHMP kinase, C-terminal domain"/>
    <property type="match status" value="1"/>
</dbReference>
<dbReference type="HAMAP" id="MF_00246">
    <property type="entry name" value="Galactokinase"/>
    <property type="match status" value="1"/>
</dbReference>
<dbReference type="InterPro" id="IPR000705">
    <property type="entry name" value="Galactokinase"/>
</dbReference>
<dbReference type="InterPro" id="IPR022963">
    <property type="entry name" value="Galactokinase_bac"/>
</dbReference>
<dbReference type="InterPro" id="IPR019741">
    <property type="entry name" value="Galactokinase_CS"/>
</dbReference>
<dbReference type="InterPro" id="IPR019539">
    <property type="entry name" value="GalKase_N"/>
</dbReference>
<dbReference type="InterPro" id="IPR013750">
    <property type="entry name" value="GHMP_kinase_C_dom"/>
</dbReference>
<dbReference type="InterPro" id="IPR036554">
    <property type="entry name" value="GHMP_kinase_C_sf"/>
</dbReference>
<dbReference type="InterPro" id="IPR006204">
    <property type="entry name" value="GHMP_kinase_N_dom"/>
</dbReference>
<dbReference type="InterPro" id="IPR006203">
    <property type="entry name" value="GHMP_knse_ATP-bd_CS"/>
</dbReference>
<dbReference type="InterPro" id="IPR006206">
    <property type="entry name" value="Mevalonate/galactokinase"/>
</dbReference>
<dbReference type="InterPro" id="IPR020568">
    <property type="entry name" value="Ribosomal_Su5_D2-typ_SF"/>
</dbReference>
<dbReference type="InterPro" id="IPR014721">
    <property type="entry name" value="Ribsml_uS5_D2-typ_fold_subgr"/>
</dbReference>
<dbReference type="NCBIfam" id="TIGR00131">
    <property type="entry name" value="gal_kin"/>
    <property type="match status" value="1"/>
</dbReference>
<dbReference type="NCBIfam" id="NF003472">
    <property type="entry name" value="PRK05101.1"/>
    <property type="match status" value="1"/>
</dbReference>
<dbReference type="PANTHER" id="PTHR10457:SF7">
    <property type="entry name" value="GALACTOKINASE-RELATED"/>
    <property type="match status" value="1"/>
</dbReference>
<dbReference type="PANTHER" id="PTHR10457">
    <property type="entry name" value="MEVALONATE KINASE/GALACTOKINASE"/>
    <property type="match status" value="1"/>
</dbReference>
<dbReference type="Pfam" id="PF10509">
    <property type="entry name" value="GalKase_gal_bdg"/>
    <property type="match status" value="1"/>
</dbReference>
<dbReference type="Pfam" id="PF08544">
    <property type="entry name" value="GHMP_kinases_C"/>
    <property type="match status" value="1"/>
</dbReference>
<dbReference type="Pfam" id="PF00288">
    <property type="entry name" value="GHMP_kinases_N"/>
    <property type="match status" value="1"/>
</dbReference>
<dbReference type="PIRSF" id="PIRSF000530">
    <property type="entry name" value="Galactokinase"/>
    <property type="match status" value="1"/>
</dbReference>
<dbReference type="PRINTS" id="PR00473">
    <property type="entry name" value="GALCTOKINASE"/>
</dbReference>
<dbReference type="PRINTS" id="PR00959">
    <property type="entry name" value="MEVGALKINASE"/>
</dbReference>
<dbReference type="SUPFAM" id="SSF55060">
    <property type="entry name" value="GHMP Kinase, C-terminal domain"/>
    <property type="match status" value="1"/>
</dbReference>
<dbReference type="SUPFAM" id="SSF54211">
    <property type="entry name" value="Ribosomal protein S5 domain 2-like"/>
    <property type="match status" value="1"/>
</dbReference>
<dbReference type="PROSITE" id="PS00106">
    <property type="entry name" value="GALACTOKINASE"/>
    <property type="match status" value="1"/>
</dbReference>
<dbReference type="PROSITE" id="PS00627">
    <property type="entry name" value="GHMP_KINASES_ATP"/>
    <property type="match status" value="1"/>
</dbReference>
<protein>
    <recommendedName>
        <fullName evidence="1">Galactokinase</fullName>
        <ecNumber evidence="1">2.7.1.6</ecNumber>
    </recommendedName>
    <alternativeName>
        <fullName evidence="1">Galactose kinase</fullName>
    </alternativeName>
</protein>
<reference key="1">
    <citation type="journal article" date="2011" name="Proc. Natl. Acad. Sci. U.S.A.">
        <title>Genomic anatomy of Escherichia coli O157:H7 outbreaks.</title>
        <authorList>
            <person name="Eppinger M."/>
            <person name="Mammel M.K."/>
            <person name="Leclerc J.E."/>
            <person name="Ravel J."/>
            <person name="Cebula T.A."/>
        </authorList>
    </citation>
    <scope>NUCLEOTIDE SEQUENCE [LARGE SCALE GENOMIC DNA]</scope>
    <source>
        <strain>EC4115 / EHEC</strain>
    </source>
</reference>
<organism>
    <name type="scientific">Escherichia coli O157:H7 (strain EC4115 / EHEC)</name>
    <dbReference type="NCBI Taxonomy" id="444450"/>
    <lineage>
        <taxon>Bacteria</taxon>
        <taxon>Pseudomonadati</taxon>
        <taxon>Pseudomonadota</taxon>
        <taxon>Gammaproteobacteria</taxon>
        <taxon>Enterobacterales</taxon>
        <taxon>Enterobacteriaceae</taxon>
        <taxon>Escherichia</taxon>
    </lineage>
</organism>
<sequence length="382" mass="41442">MSLKEKTQSLFANAFGYPATHTIQAPGRVNLIGEHTDYNDGFVLPCAIDYQTVISCAPRDDRKVRVMAADYENQLDEFSLDAPIVAHENYQWANYVRGVVKHLQLRNNSFGGVDMVISGNVPQGAGLSSSASLEVAVGTVLQQLYHLPLDGAQIALNGQEAENQFVGCNCGIMDQLISALGKKDHALLIDCRSLGTKAVSMPKGVAVVIINSNFKRTLVGSEYNTRREQCETGARFFQQPALRDVTIEEFNAVAHELDPIVAKRVRHILTENARTVEAASALEQGDLKRMGELMAESHASMRDDFEITVPQIDTLVEIVKAVIGDKGGVRMTGGGFGGCIVALIPEELVPAVQQAVAEQYEAKTGIKETFYVCKPSQGAGQC</sequence>
<gene>
    <name evidence="1" type="primary">galK</name>
    <name type="ordered locus">ECH74115_0860</name>
</gene>